<proteinExistence type="inferred from homology"/>
<protein>
    <recommendedName>
        <fullName evidence="1">Cytochrome b6-f complex subunit 8</fullName>
    </recommendedName>
    <alternativeName>
        <fullName evidence="1">Cytochrome b6-f complex subunit PetN</fullName>
    </alternativeName>
    <alternativeName>
        <fullName evidence="1">Cytochrome b6-f complex subunit VIII</fullName>
    </alternativeName>
</protein>
<comment type="function">
    <text evidence="1">Component of the cytochrome b6-f complex, which mediates electron transfer between photosystem II (PSII) and photosystem I (PSI), cyclic electron flow around PSI, and state transitions.</text>
</comment>
<comment type="subunit">
    <text evidence="1">The 4 large subunits of the cytochrome b6-f complex are cytochrome b6, subunit IV (17 kDa polypeptide, PetD), cytochrome f and the Rieske protein, while the 4 small subunits are PetG, PetL, PetM and PetN. The complex functions as a dimer.</text>
</comment>
<comment type="subcellular location">
    <subcellularLocation>
        <location evidence="1">Cellular thylakoid membrane</location>
        <topology evidence="1">Single-pass membrane protein</topology>
    </subcellularLocation>
</comment>
<comment type="similarity">
    <text evidence="1">Belongs to the PetN family.</text>
</comment>
<comment type="sequence caution" evidence="2">
    <conflict type="erroneous initiation">
        <sequence resource="EMBL-CDS" id="ABB26020"/>
    </conflict>
</comment>
<evidence type="ECO:0000255" key="1">
    <source>
        <dbReference type="HAMAP-Rule" id="MF_00395"/>
    </source>
</evidence>
<evidence type="ECO:0000305" key="2"/>
<reference key="1">
    <citation type="submission" date="2005-08" db="EMBL/GenBank/DDBJ databases">
        <title>Complete sequence of Synechococcus sp. CC9902.</title>
        <authorList>
            <person name="Copeland A."/>
            <person name="Lucas S."/>
            <person name="Lapidus A."/>
            <person name="Barry K."/>
            <person name="Detter J.C."/>
            <person name="Glavina T."/>
            <person name="Hammon N."/>
            <person name="Israni S."/>
            <person name="Pitluck S."/>
            <person name="Martinez M."/>
            <person name="Schmutz J."/>
            <person name="Larimer F."/>
            <person name="Land M."/>
            <person name="Kyrpides N."/>
            <person name="Ivanova N."/>
            <person name="Richardson P."/>
        </authorList>
    </citation>
    <scope>NUCLEOTIDE SEQUENCE [LARGE SCALE GENOMIC DNA]</scope>
    <source>
        <strain>CC9902</strain>
    </source>
</reference>
<dbReference type="EMBL" id="CP000097">
    <property type="protein sequence ID" value="ABB26020.1"/>
    <property type="status" value="ALT_INIT"/>
    <property type="molecule type" value="Genomic_DNA"/>
</dbReference>
<dbReference type="RefSeq" id="WP_009789707.1">
    <property type="nucleotide sequence ID" value="NC_007513.1"/>
</dbReference>
<dbReference type="SMR" id="Q3AY07"/>
<dbReference type="STRING" id="316279.Syncc9902_1056"/>
<dbReference type="KEGG" id="sye:Syncc9902_1056"/>
<dbReference type="eggNOG" id="ENOG502ZT1J">
    <property type="taxonomic scope" value="Bacteria"/>
</dbReference>
<dbReference type="HOGENOM" id="CLU_2995107_0_0_3"/>
<dbReference type="OrthoDB" id="560308at2"/>
<dbReference type="Proteomes" id="UP000002712">
    <property type="component" value="Chromosome"/>
</dbReference>
<dbReference type="GO" id="GO:0009512">
    <property type="term" value="C:cytochrome b6f complex"/>
    <property type="evidence" value="ECO:0007669"/>
    <property type="project" value="InterPro"/>
</dbReference>
<dbReference type="GO" id="GO:0031676">
    <property type="term" value="C:plasma membrane-derived thylakoid membrane"/>
    <property type="evidence" value="ECO:0007669"/>
    <property type="project" value="UniProtKB-SubCell"/>
</dbReference>
<dbReference type="GO" id="GO:0045158">
    <property type="term" value="F:electron transporter, transferring electrons within cytochrome b6/f complex of photosystem II activity"/>
    <property type="evidence" value="ECO:0007669"/>
    <property type="project" value="InterPro"/>
</dbReference>
<dbReference type="GO" id="GO:0017004">
    <property type="term" value="P:cytochrome complex assembly"/>
    <property type="evidence" value="ECO:0007669"/>
    <property type="project" value="UniProtKB-UniRule"/>
</dbReference>
<dbReference type="GO" id="GO:0015979">
    <property type="term" value="P:photosynthesis"/>
    <property type="evidence" value="ECO:0007669"/>
    <property type="project" value="UniProtKB-KW"/>
</dbReference>
<dbReference type="HAMAP" id="MF_00395">
    <property type="entry name" value="Cytb6_f_PetN"/>
    <property type="match status" value="1"/>
</dbReference>
<dbReference type="InterPro" id="IPR036143">
    <property type="entry name" value="Cytochr_b6-f_cplx_su8_sf"/>
</dbReference>
<dbReference type="InterPro" id="IPR005497">
    <property type="entry name" value="Cytochrome_b6-f_cplx_su8"/>
</dbReference>
<dbReference type="NCBIfam" id="NF002709">
    <property type="entry name" value="PRK02529.1"/>
    <property type="match status" value="1"/>
</dbReference>
<dbReference type="Pfam" id="PF03742">
    <property type="entry name" value="PetN"/>
    <property type="match status" value="1"/>
</dbReference>
<dbReference type="SUPFAM" id="SSF103451">
    <property type="entry name" value="PetN subunit of the cytochrome b6f complex"/>
    <property type="match status" value="1"/>
</dbReference>
<gene>
    <name evidence="1" type="primary">petN</name>
    <name type="ordered locus">Syncc9902_1056</name>
</gene>
<organism>
    <name type="scientific">Synechococcus sp. (strain CC9902)</name>
    <dbReference type="NCBI Taxonomy" id="316279"/>
    <lineage>
        <taxon>Bacteria</taxon>
        <taxon>Bacillati</taxon>
        <taxon>Cyanobacteriota</taxon>
        <taxon>Cyanophyceae</taxon>
        <taxon>Synechococcales</taxon>
        <taxon>Synechococcaceae</taxon>
        <taxon>Synechococcus</taxon>
    </lineage>
</organism>
<sequence length="33" mass="3626">MLFTVAWASLAAMFSFSIAMVVWGRNGDGTLKF</sequence>
<name>PETN_SYNS9</name>
<feature type="chain" id="PRO_0000355414" description="Cytochrome b6-f complex subunit 8">
    <location>
        <begin position="1"/>
        <end position="33"/>
    </location>
</feature>
<feature type="transmembrane region" description="Helical" evidence="1">
    <location>
        <begin position="2"/>
        <end position="22"/>
    </location>
</feature>
<keyword id="KW-0249">Electron transport</keyword>
<keyword id="KW-0472">Membrane</keyword>
<keyword id="KW-0602">Photosynthesis</keyword>
<keyword id="KW-1185">Reference proteome</keyword>
<keyword id="KW-0793">Thylakoid</keyword>
<keyword id="KW-0812">Transmembrane</keyword>
<keyword id="KW-1133">Transmembrane helix</keyword>
<keyword id="KW-0813">Transport</keyword>
<accession>Q3AY07</accession>